<dbReference type="EMBL" id="U72995">
    <property type="protein sequence ID" value="AAC53149.1"/>
    <property type="molecule type" value="mRNA"/>
</dbReference>
<dbReference type="PIR" id="T31671">
    <property type="entry name" value="T31671"/>
</dbReference>
<dbReference type="RefSeq" id="NP_446037.1">
    <property type="nucleotide sequence ID" value="NM_053585.3"/>
</dbReference>
<dbReference type="BioGRID" id="250173">
    <property type="interactions" value="5"/>
</dbReference>
<dbReference type="FunCoup" id="O08873">
    <property type="interactions" value="1739"/>
</dbReference>
<dbReference type="IntAct" id="O08873">
    <property type="interactions" value="1"/>
</dbReference>
<dbReference type="MINT" id="O08873"/>
<dbReference type="STRING" id="10116.ENSRNOP00000075233"/>
<dbReference type="GlyGen" id="O08873">
    <property type="glycosylation" value="1 site, 1 O-linked glycan (1 site)"/>
</dbReference>
<dbReference type="iPTMnet" id="O08873"/>
<dbReference type="PhosphoSitePlus" id="O08873"/>
<dbReference type="jPOST" id="O08873"/>
<dbReference type="PaxDb" id="10116-ENSRNOP00000017360"/>
<dbReference type="GeneID" id="94193"/>
<dbReference type="KEGG" id="rno:94193"/>
<dbReference type="UCSC" id="RGD:619922">
    <property type="organism name" value="rat"/>
</dbReference>
<dbReference type="AGR" id="RGD:619922"/>
<dbReference type="CTD" id="8567"/>
<dbReference type="RGD" id="619922">
    <property type="gene designation" value="Madd"/>
</dbReference>
<dbReference type="VEuPathDB" id="HostDB:ENSRNOG00000012568"/>
<dbReference type="eggNOG" id="KOG3570">
    <property type="taxonomic scope" value="Eukaryota"/>
</dbReference>
<dbReference type="InParanoid" id="O08873"/>
<dbReference type="PhylomeDB" id="O08873"/>
<dbReference type="Reactome" id="R-RNO-5357905">
    <property type="pathway name" value="Regulation of TNFR1 signaling"/>
</dbReference>
<dbReference type="Reactome" id="R-RNO-8876198">
    <property type="pathway name" value="RAB GEFs exchange GTP for GDP on RABs"/>
</dbReference>
<dbReference type="PRO" id="PR:O08873"/>
<dbReference type="Proteomes" id="UP000002494">
    <property type="component" value="Chromosome 3"/>
</dbReference>
<dbReference type="Bgee" id="ENSRNOG00000012568">
    <property type="expression patterns" value="Expressed in frontal cortex and 20 other cell types or tissues"/>
</dbReference>
<dbReference type="ExpressionAtlas" id="O08873">
    <property type="expression patterns" value="baseline and differential"/>
</dbReference>
<dbReference type="GO" id="GO:1904115">
    <property type="term" value="C:axon cytoplasm"/>
    <property type="evidence" value="ECO:0007669"/>
    <property type="project" value="GOC"/>
</dbReference>
<dbReference type="GO" id="GO:0005829">
    <property type="term" value="C:cytosol"/>
    <property type="evidence" value="ECO:0000318"/>
    <property type="project" value="GO_Central"/>
</dbReference>
<dbReference type="GO" id="GO:0016020">
    <property type="term" value="C:membrane"/>
    <property type="evidence" value="ECO:0000250"/>
    <property type="project" value="UniProtKB"/>
</dbReference>
<dbReference type="GO" id="GO:0005886">
    <property type="term" value="C:plasma membrane"/>
    <property type="evidence" value="ECO:0007669"/>
    <property type="project" value="UniProtKB-SubCell"/>
</dbReference>
<dbReference type="GO" id="GO:0045202">
    <property type="term" value="C:synapse"/>
    <property type="evidence" value="ECO:0000314"/>
    <property type="project" value="SynGO"/>
</dbReference>
<dbReference type="GO" id="GO:0008021">
    <property type="term" value="C:synaptic vesicle"/>
    <property type="evidence" value="ECO:0000314"/>
    <property type="project" value="RGD"/>
</dbReference>
<dbReference type="GO" id="GO:0005085">
    <property type="term" value="F:guanyl-nucleotide exchange factor activity"/>
    <property type="evidence" value="ECO:0000314"/>
    <property type="project" value="RGD"/>
</dbReference>
<dbReference type="GO" id="GO:0048490">
    <property type="term" value="P:anterograde synaptic vesicle transport"/>
    <property type="evidence" value="ECO:0000266"/>
    <property type="project" value="RGD"/>
</dbReference>
<dbReference type="GO" id="GO:0097194">
    <property type="term" value="P:execution phase of apoptosis"/>
    <property type="evidence" value="ECO:0000266"/>
    <property type="project" value="RGD"/>
</dbReference>
<dbReference type="GO" id="GO:2001234">
    <property type="term" value="P:negative regulation of apoptotic signaling pathway"/>
    <property type="evidence" value="ECO:0000266"/>
    <property type="project" value="RGD"/>
</dbReference>
<dbReference type="GO" id="GO:0060125">
    <property type="term" value="P:negative regulation of growth hormone secretion"/>
    <property type="evidence" value="ECO:0000314"/>
    <property type="project" value="RGD"/>
</dbReference>
<dbReference type="GO" id="GO:1902277">
    <property type="term" value="P:negative regulation of pancreatic amylase secretion"/>
    <property type="evidence" value="ECO:0000315"/>
    <property type="project" value="RGD"/>
</dbReference>
<dbReference type="GO" id="GO:0043410">
    <property type="term" value="P:positive regulation of MAPK cascade"/>
    <property type="evidence" value="ECO:0000250"/>
    <property type="project" value="UniProtKB"/>
</dbReference>
<dbReference type="GO" id="GO:0042981">
    <property type="term" value="P:regulation of apoptotic process"/>
    <property type="evidence" value="ECO:0000266"/>
    <property type="project" value="RGD"/>
</dbReference>
<dbReference type="GO" id="GO:0051726">
    <property type="term" value="P:regulation of cell cycle"/>
    <property type="evidence" value="ECO:0000250"/>
    <property type="project" value="UniProtKB"/>
</dbReference>
<dbReference type="GO" id="GO:2001236">
    <property type="term" value="P:regulation of extrinsic apoptotic signaling pathway"/>
    <property type="evidence" value="ECO:0000266"/>
    <property type="project" value="RGD"/>
</dbReference>
<dbReference type="GO" id="GO:1902041">
    <property type="term" value="P:regulation of extrinsic apoptotic signaling pathway via death domain receptors"/>
    <property type="evidence" value="ECO:0000250"/>
    <property type="project" value="UniProtKB"/>
</dbReference>
<dbReference type="GO" id="GO:0032483">
    <property type="term" value="P:regulation of Rab protein signal transduction"/>
    <property type="evidence" value="ECO:0000266"/>
    <property type="project" value="RGD"/>
</dbReference>
<dbReference type="FunFam" id="3.40.50.11500:FF:000002">
    <property type="entry name" value="MAP kinase-activating death domain protein-like Protein"/>
    <property type="match status" value="1"/>
</dbReference>
<dbReference type="Gene3D" id="3.30.450.200">
    <property type="match status" value="1"/>
</dbReference>
<dbReference type="Gene3D" id="3.40.50.11500">
    <property type="match status" value="1"/>
</dbReference>
<dbReference type="InterPro" id="IPR001194">
    <property type="entry name" value="cDENN_dom"/>
</dbReference>
<dbReference type="InterPro" id="IPR005112">
    <property type="entry name" value="dDENN_dom"/>
</dbReference>
<dbReference type="InterPro" id="IPR056574">
    <property type="entry name" value="Death_MADD"/>
</dbReference>
<dbReference type="InterPro" id="IPR043153">
    <property type="entry name" value="DENN_C"/>
</dbReference>
<dbReference type="InterPro" id="IPR039980">
    <property type="entry name" value="MADD"/>
</dbReference>
<dbReference type="InterPro" id="IPR037516">
    <property type="entry name" value="Tripartite_DENN"/>
</dbReference>
<dbReference type="InterPro" id="IPR005113">
    <property type="entry name" value="uDENN_dom"/>
</dbReference>
<dbReference type="PANTHER" id="PTHR13008:SF7">
    <property type="entry name" value="MAP KINASE-ACTIVATING DEATH DOMAIN PROTEIN"/>
    <property type="match status" value="1"/>
</dbReference>
<dbReference type="PANTHER" id="PTHR13008">
    <property type="entry name" value="MAP-KINASE ACTIVATING DEATH DOMAIN PROTEIN MADD /DENN/AEX-3 C.ELEGANS"/>
    <property type="match status" value="1"/>
</dbReference>
<dbReference type="Pfam" id="PF23629">
    <property type="entry name" value="Death_MADD"/>
    <property type="match status" value="1"/>
</dbReference>
<dbReference type="Pfam" id="PF02141">
    <property type="entry name" value="DENN"/>
    <property type="match status" value="1"/>
</dbReference>
<dbReference type="Pfam" id="PF25328">
    <property type="entry name" value="PH_MADD"/>
    <property type="match status" value="1"/>
</dbReference>
<dbReference type="Pfam" id="PF03456">
    <property type="entry name" value="uDENN"/>
    <property type="match status" value="1"/>
</dbReference>
<dbReference type="SMART" id="SM00801">
    <property type="entry name" value="dDENN"/>
    <property type="match status" value="1"/>
</dbReference>
<dbReference type="SMART" id="SM00799">
    <property type="entry name" value="DENN"/>
    <property type="match status" value="1"/>
</dbReference>
<dbReference type="SMART" id="SM00800">
    <property type="entry name" value="uDENN"/>
    <property type="match status" value="1"/>
</dbReference>
<dbReference type="PROSITE" id="PS50211">
    <property type="entry name" value="DENN"/>
    <property type="match status" value="1"/>
</dbReference>
<feature type="initiator methionine" description="Removed" evidence="7">
    <location>
        <position position="1"/>
    </location>
</feature>
<feature type="chain" id="PRO_0000278140" description="MAP kinase-activating death domain protein" evidence="7">
    <location>
        <begin position="2"/>
        <end position="1602"/>
    </location>
</feature>
<feature type="domain" description="uDENN" evidence="4">
    <location>
        <begin position="13"/>
        <end position="267"/>
    </location>
</feature>
<feature type="domain" description="cDENN" evidence="4">
    <location>
        <begin position="288"/>
        <end position="428"/>
    </location>
</feature>
<feature type="domain" description="dDENN" evidence="4">
    <location>
        <begin position="430"/>
        <end position="564"/>
    </location>
</feature>
<feature type="domain" description="Death" evidence="3">
    <location>
        <begin position="1295"/>
        <end position="1370"/>
    </location>
</feature>
<feature type="region of interest" description="Disordered" evidence="5">
    <location>
        <begin position="105"/>
        <end position="167"/>
    </location>
</feature>
<feature type="region of interest" description="Disordered" evidence="5">
    <location>
        <begin position="603"/>
        <end position="635"/>
    </location>
</feature>
<feature type="region of interest" description="Disordered" evidence="5">
    <location>
        <begin position="676"/>
        <end position="840"/>
    </location>
</feature>
<feature type="region of interest" description="Disordered" evidence="5">
    <location>
        <begin position="870"/>
        <end position="920"/>
    </location>
</feature>
<feature type="region of interest" description="Disordered" evidence="5">
    <location>
        <begin position="1030"/>
        <end position="1089"/>
    </location>
</feature>
<feature type="region of interest" description="Disordered" evidence="5">
    <location>
        <begin position="1113"/>
        <end position="1231"/>
    </location>
</feature>
<feature type="compositionally biased region" description="Basic and acidic residues" evidence="5">
    <location>
        <begin position="105"/>
        <end position="121"/>
    </location>
</feature>
<feature type="compositionally biased region" description="Low complexity" evidence="5">
    <location>
        <begin position="126"/>
        <end position="137"/>
    </location>
</feature>
<feature type="compositionally biased region" description="Polar residues" evidence="5">
    <location>
        <begin position="138"/>
        <end position="156"/>
    </location>
</feature>
<feature type="compositionally biased region" description="Basic residues" evidence="5">
    <location>
        <begin position="157"/>
        <end position="166"/>
    </location>
</feature>
<feature type="compositionally biased region" description="Acidic residues" evidence="5">
    <location>
        <begin position="614"/>
        <end position="629"/>
    </location>
</feature>
<feature type="compositionally biased region" description="Polar residues" evidence="5">
    <location>
        <begin position="688"/>
        <end position="698"/>
    </location>
</feature>
<feature type="compositionally biased region" description="Low complexity" evidence="5">
    <location>
        <begin position="699"/>
        <end position="711"/>
    </location>
</feature>
<feature type="compositionally biased region" description="Polar residues" evidence="5">
    <location>
        <begin position="789"/>
        <end position="803"/>
    </location>
</feature>
<feature type="compositionally biased region" description="Low complexity" evidence="5">
    <location>
        <begin position="826"/>
        <end position="839"/>
    </location>
</feature>
<feature type="compositionally biased region" description="Polar residues" evidence="5">
    <location>
        <begin position="911"/>
        <end position="920"/>
    </location>
</feature>
<feature type="compositionally biased region" description="Polar residues" evidence="5">
    <location>
        <begin position="1119"/>
        <end position="1134"/>
    </location>
</feature>
<feature type="compositionally biased region" description="Low complexity" evidence="5">
    <location>
        <begin position="1151"/>
        <end position="1162"/>
    </location>
</feature>
<feature type="compositionally biased region" description="Polar residues" evidence="5">
    <location>
        <begin position="1191"/>
        <end position="1209"/>
    </location>
</feature>
<feature type="modified residue" description="Phosphoserine" evidence="2">
    <location>
        <position position="155"/>
    </location>
</feature>
<feature type="modified residue" description="Phosphoserine" evidence="12">
    <location>
        <position position="688"/>
    </location>
</feature>
<feature type="modified residue" description="Phosphoserine" evidence="12">
    <location>
        <position position="691"/>
    </location>
</feature>
<feature type="modified residue" description="Phosphoserine" evidence="12">
    <location>
        <position position="778"/>
    </location>
</feature>
<feature type="modified residue" description="Phosphoserine" evidence="11 12">
    <location>
        <position position="812"/>
    </location>
</feature>
<feature type="modified residue" description="Phosphoserine" evidence="2">
    <location>
        <position position="817"/>
    </location>
</feature>
<feature type="modified residue" description="Phosphoserine" evidence="2">
    <location>
        <position position="819"/>
    </location>
</feature>
<feature type="modified residue" description="Phosphoserine" evidence="2">
    <location>
        <position position="857"/>
    </location>
</feature>
<feature type="modified residue" description="Phosphoserine" evidence="2">
    <location>
        <position position="861"/>
    </location>
</feature>
<feature type="modified residue" description="Phosphoserine" evidence="2">
    <location>
        <position position="895"/>
    </location>
</feature>
<feature type="modified residue" description="Phosphoserine" evidence="2">
    <location>
        <position position="900"/>
    </location>
</feature>
<feature type="modified residue" description="Phosphoserine" evidence="12">
    <location>
        <position position="909"/>
    </location>
</feature>
<feature type="modified residue" description="Phosphoserine" evidence="12">
    <location>
        <position position="1038"/>
    </location>
</feature>
<feature type="modified residue" description="Phosphothreonine" evidence="12">
    <location>
        <position position="1040"/>
    </location>
</feature>
<feature type="modified residue" description="Phosphothreonine" evidence="12">
    <location>
        <position position="1045"/>
    </location>
</feature>
<feature type="modified residue" description="Phosphoserine" evidence="1">
    <location>
        <position position="1089"/>
    </location>
</feature>
<feature type="modified residue" description="Phosphothreonine" evidence="2">
    <location>
        <position position="1194"/>
    </location>
</feature>
<feature type="modified residue" description="Phosphoserine" evidence="12">
    <location>
        <position position="1196"/>
    </location>
</feature>
<feature type="modified residue" description="Phosphoserine" evidence="2">
    <location>
        <position position="1225"/>
    </location>
</feature>
<gene>
    <name evidence="10" type="primary">Madd</name>
</gene>
<protein>
    <recommendedName>
        <fullName>MAP kinase-activating death domain protein</fullName>
    </recommendedName>
    <alternativeName>
        <fullName>Rab3 GDP/GTP exchange factor</fullName>
        <shortName evidence="8">RabGEF</shortName>
    </alternativeName>
    <alternativeName>
        <fullName evidence="8">Rab3 GDP/GTP exchange protein</fullName>
        <shortName evidence="8">RabGEP</shortName>
    </alternativeName>
</protein>
<organism>
    <name type="scientific">Rattus norvegicus</name>
    <name type="common">Rat</name>
    <dbReference type="NCBI Taxonomy" id="10116"/>
    <lineage>
        <taxon>Eukaryota</taxon>
        <taxon>Metazoa</taxon>
        <taxon>Chordata</taxon>
        <taxon>Craniata</taxon>
        <taxon>Vertebrata</taxon>
        <taxon>Euteleostomi</taxon>
        <taxon>Mammalia</taxon>
        <taxon>Eutheria</taxon>
        <taxon>Euarchontoglires</taxon>
        <taxon>Glires</taxon>
        <taxon>Rodentia</taxon>
        <taxon>Myomorpha</taxon>
        <taxon>Muroidea</taxon>
        <taxon>Muridae</taxon>
        <taxon>Murinae</taxon>
        <taxon>Rattus</taxon>
    </lineage>
</organism>
<evidence type="ECO:0000250" key="1">
    <source>
        <dbReference type="UniProtKB" id="Q80U28"/>
    </source>
</evidence>
<evidence type="ECO:0000250" key="2">
    <source>
        <dbReference type="UniProtKB" id="Q8WXG6"/>
    </source>
</evidence>
<evidence type="ECO:0000255" key="3"/>
<evidence type="ECO:0000255" key="4">
    <source>
        <dbReference type="PROSITE-ProRule" id="PRU00304"/>
    </source>
</evidence>
<evidence type="ECO:0000256" key="5">
    <source>
        <dbReference type="SAM" id="MobiDB-lite"/>
    </source>
</evidence>
<evidence type="ECO:0000269" key="6">
    <source>
    </source>
</evidence>
<evidence type="ECO:0000269" key="7">
    <source>
    </source>
</evidence>
<evidence type="ECO:0000305" key="8"/>
<evidence type="ECO:0000312" key="9">
    <source>
        <dbReference type="EMBL" id="AAC53149.1"/>
    </source>
</evidence>
<evidence type="ECO:0000312" key="10">
    <source>
        <dbReference type="RGD" id="619922"/>
    </source>
</evidence>
<evidence type="ECO:0007744" key="11">
    <source>
    </source>
</evidence>
<evidence type="ECO:0007744" key="12">
    <source>
    </source>
</evidence>
<comment type="function">
    <text evidence="1 2 7">Guanyl-nucleotide exchange factor that regulates small GTPases of the Rab family (PubMed:9020086). Converts GDP-bound inactive form of RAB27A and RAB27B to the GTP-bound active forms (By similarity). Converts GDP-bound inactive form of RAB3A, RAB3C and RAB3D to the GTP-bound active forms, GTPases involved in synaptic vesicle exocytosis and vesicle secretion (PubMed:9020086). Plays a role in synaptic vesicle formation and in vesicle trafficking at the neuromuscular junction (By similarity). Involved in up-regulating a post-docking step of synaptic exocytosis in central synapses (By similarity). Probably by binding to the motor proteins KIF1B and KIF1A, mediates motor-dependent transport of GTP-RAB3A-positive vesicles to the presynaptic nerve terminals (By similarity). Plays a role in TNFA-mediated activation of the MAPK pathway, including ERK1/2 (By similarity). May link TNFRSF1A with MAP kinase activation (By similarity). May be involved in the regulation of TNFA-induced apoptosis (By similarity).</text>
</comment>
<comment type="subunit">
    <text evidence="1 2">Interacts (via death domain) with TNFRSF1A (via death domain) (By similarity). Interacts with PIDD1 (By similarity). Interacts with YWHAZ (By similarity). Interacts (via death domain) with KIF1B; links the motor KIF1B to Rab3-carrying vesicles in anterograde synaptic vesicle transport (By similarity). Interacts with KIF1A (By similarity). Interacts (via uDENN domain) with RAB3A, RAB3B, RAB3C and RAB3D; the GTP-bound form of the Rab proteins is preferred for interaction (By similarity).</text>
</comment>
<comment type="subcellular location">
    <subcellularLocation>
        <location evidence="2">Cell membrane</location>
    </subcellularLocation>
    <subcellularLocation>
        <location evidence="2">Cytoplasm</location>
    </subcellularLocation>
    <subcellularLocation>
        <location evidence="1">Cell projection</location>
        <location evidence="1">Axon</location>
    </subcellularLocation>
</comment>
<comment type="tissue specificity">
    <text evidence="7">Expressed in all tissues examined with the highest expression in brain.</text>
</comment>
<comment type="disruption phenotype">
    <text evidence="6">RNAi-mediated knockdown in hippocampal cells leads to neuronal cell death.</text>
</comment>
<comment type="similarity">
    <text evidence="8">Belongs to the MADD family.</text>
</comment>
<sequence length="1602" mass="177992">MVQKKFCPRLLDYLVIVGARHPSSDSVAQTPELLRRYPLEDHPEFPLPPDVVFFCQPEGCLSVRQRRMSLRDDTSFVFTLTDKDTGVTRYGICVNFYRSFQKRMPKEKAEGGAGPRGKEGAHAPCASEEAATESSESGSTLQPPSADSTPDVNQSPRGKRRAKAGNRSRNSTLTSLCVLSHYPFFSTFRECLYTLKRLVDCCSERLLGKKPGIPRGVQRDTMWRIFTGSLLVEEKSSALLHDLREIEAWIYRLLRSPVPVSGQKRVDIEVLPQEVQQALTFALPDPSRFTLVDFPLHLPLELLGVDACLQVLTCILLEHKVVLQSRDYNALSMSVMAFVAMIYPLEYMFPVIPLLPTCMASAEQLLLAPTPYIIGVPASFFLYKLDFKMPDDVWLVDLDSNRVIAPTNAEVLPILPEPESLELKKHLKQALASMSLNTQPILNLEKFHEGQETPLLLGRFSNDLQSTPSTEFNPLIYGNDVDSVDVATRVAMVRFFNSANVLQGFQMHTRTLRLFPRPVVAFQAGSFLASRPRQTPFAEKLARTQAVEYFGEWILNPSNYAFQRIHNNTFDPALIGDKPKWYAHQLQPIHYRVYDSNSQLAEALSVPPERDSESDPTDDSGSDSMDYDDSSSSYSSLGDFVSEMMKCDINGDTPNVDPLTHAALGDASEVEIDELQPQKEGEEPGPDSENSQENLPLRSSSSTTASSSPSTIVHGAHSEPADSTEVGDKAATGISKPLPPVPPSICKSTVDRRQTETGEGSVCQRTYDHPYFEPQYGSPAEEDDDEQGESYTPRFSQHASGSRAQKLLRPNSLKLASDSDAESDSRASSPNSTVSNNSTEGFGGIMSFASSLYRNHSTSFSLSNLTLPTKGAREKTTPFPSLKGNRRALVDQKSSVIKHSPTVKREPPSPQGRSSNSSENQQFLKEVVHSVLDGQGVGWLNMKKVRRLLESEQLRVFVLSKLSRAVQSEDDARQDVIQDVEISRKVYKGMLDLLKCTVLSLEQSYAHAGLGGMASIFGLLEIAQTHYYSKEPDKRKRSPTENVNTPVGKDPGLAGRGDPKAMAQLRVPQLGPRAPSATGRGPKELDTRSLKEENFVASVGPEVIKPVFDLGETEEKKSQISADSGVSLASASQRTDQDSVIGVSPAVMIRSSSQDSEVSNSSGETLGADSDLSSNAGDGPGGEGSAHLASSRATLSDSEIETNSATSTIFGKAHSLKPKEKPASSPVRSSEDVSQRVYLYEGLLGRDKGSMWDQLEDAAMETFSISKERSTLWDQMQFWEDAFLDAVMLEREGMGMDQGPQEMIDRYLSLGEHDRKRLEDDEDRLLATLLHNLISYMLLMKVNKNDIRKKVRRLMGKSHVGLVYSQQINEVLDQLTNLNGRDLSIRSSGSRHMKKQTFVVHAGTDTNGDIFFMEVCDDCVVLRSNIGTVYERWWYEKLINMTYCPKTKVLCLWRRNGSETQLNKFYTKKCRELYYCVKDSMERAAARQQSIKPGPELGGEFPVQDMKTGEGGLLQVTLEGINLKFMHNQVFIELNHIKKCNTVRGVFVLEEFVPEIKEVVSHKYKTPMAHEICYSVLCLFSYVAAVRSSEEDLRTPPRPVSS</sequence>
<reference evidence="8 9" key="1">
    <citation type="journal article" date="1997" name="J. Biol. Chem.">
        <title>Isolation and characterization of a GDP/GTP exchange protein specific for the Rab3 subfamily small G proteins.</title>
        <authorList>
            <person name="Wada M."/>
            <person name="Nakanishi H."/>
            <person name="Satoh A."/>
            <person name="Hirano H."/>
            <person name="Obaishi H."/>
            <person name="Matsuura Y."/>
            <person name="Takai Y."/>
        </authorList>
    </citation>
    <scope>NUCLEOTIDE SEQUENCE [MRNA]</scope>
    <scope>PROTEIN SEQUENCE OF 2-23; 119-138; 680-699; 748-766; 905-920; 962-985; 1061-1083; 1106-1116; 1222-1248 AND 1493-1507</scope>
    <scope>FUNCTION</scope>
    <scope>TISSUE SPECIFICITY</scope>
    <source>
        <tissue evidence="7">Brain</tissue>
    </source>
</reference>
<reference evidence="8" key="2">
    <citation type="journal article" date="2004" name="Proc. Natl. Acad. Sci. U.S.A.">
        <title>Down-regulation of DENN/MADD, a TNF receptor binding protein, correlates with neuronal cell death in Alzheimer's disease brain and hippocampal neurons.</title>
        <authorList>
            <person name="Del Villar K."/>
            <person name="Miller C.A."/>
        </authorList>
    </citation>
    <scope>DISRUPTION PHENOTYPE</scope>
</reference>
<reference key="3">
    <citation type="journal article" date="2006" name="Proc. Natl. Acad. Sci. U.S.A.">
        <title>Quantitative phosphoproteomics of vasopressin-sensitive renal cells: regulation of aquaporin-2 phosphorylation at two sites.</title>
        <authorList>
            <person name="Hoffert J.D."/>
            <person name="Pisitkun T."/>
            <person name="Wang G."/>
            <person name="Shen R.-F."/>
            <person name="Knepper M.A."/>
        </authorList>
    </citation>
    <scope>PHOSPHORYLATION [LARGE SCALE ANALYSIS] AT SER-812</scope>
    <scope>IDENTIFICATION BY MASS SPECTROMETRY [LARGE SCALE ANALYSIS]</scope>
</reference>
<reference key="4">
    <citation type="journal article" date="2012" name="Nat. Commun.">
        <title>Quantitative maps of protein phosphorylation sites across 14 different rat organs and tissues.</title>
        <authorList>
            <person name="Lundby A."/>
            <person name="Secher A."/>
            <person name="Lage K."/>
            <person name="Nordsborg N.B."/>
            <person name="Dmytriyev A."/>
            <person name="Lundby C."/>
            <person name="Olsen J.V."/>
        </authorList>
    </citation>
    <scope>PHOSPHORYLATION [LARGE SCALE ANALYSIS] AT SER-688; SER-691; SER-778; SER-812; SER-909; SER-1038; THR-1040; THR-1045 AND SER-1196</scope>
    <scope>IDENTIFICATION BY MASS SPECTROMETRY [LARGE SCALE ANALYSIS]</scope>
</reference>
<accession>O08873</accession>
<proteinExistence type="evidence at protein level"/>
<name>MADD_RAT</name>
<keyword id="KW-0053">Apoptosis</keyword>
<keyword id="KW-1003">Cell membrane</keyword>
<keyword id="KW-0966">Cell projection</keyword>
<keyword id="KW-0963">Cytoplasm</keyword>
<keyword id="KW-0903">Direct protein sequencing</keyword>
<keyword id="KW-0344">Guanine-nucleotide releasing factor</keyword>
<keyword id="KW-0472">Membrane</keyword>
<keyword id="KW-0597">Phosphoprotein</keyword>
<keyword id="KW-1185">Reference proteome</keyword>